<reference key="1">
    <citation type="journal article" date="2003" name="Genome Biol.">
        <title>Evidence from comparative genomics for a complete sexual cycle in the 'asexual' pathogenic yeast Candida glabrata.</title>
        <authorList>
            <person name="Wong S."/>
            <person name="Fares M.A."/>
            <person name="Zimmermann W."/>
            <person name="Butler G."/>
            <person name="Wolfe K.H."/>
        </authorList>
    </citation>
    <scope>NUCLEOTIDE SEQUENCE [GENOMIC DNA]</scope>
    <source>
        <strain>ATCC 24205 / CBS 2170 / NBRC 10602 / NRRL Y-2379 / UCD 56-2</strain>
    </source>
</reference>
<sequence>MMSKDKNRTNDVLIEAGLLSLVLTGTTLATYRGYTRYLRQIRNARGIPSKVFRKRWLYGKVTAVGDGDNFHFFHMPGGLFGGWGWLRSTPQLEKIDIVKKSRNSKRLLDFFRSSNKYVDLPVQYKNKRRLPTISVRICGVDAPERSHFGNPAQPYSEEALIWLQHEILGKKLWIKPLNIDQYGRCVASIRYWTRFGYKDLSLQMLKEGLALVYEGKSNAEFGGREKIYRRHEFIAKSKRIGMWSQKKLETPGDYKRKL</sequence>
<dbReference type="EC" id="3.1.-.-"/>
<dbReference type="EMBL" id="AY181250">
    <property type="protein sequence ID" value="AAO25614.1"/>
    <property type="molecule type" value="Genomic_DNA"/>
</dbReference>
<dbReference type="PhylomeDB" id="Q874L8"/>
<dbReference type="GO" id="GO:0016020">
    <property type="term" value="C:membrane"/>
    <property type="evidence" value="ECO:0007669"/>
    <property type="project" value="UniProtKB-SubCell"/>
</dbReference>
<dbReference type="GO" id="GO:0005739">
    <property type="term" value="C:mitochondrion"/>
    <property type="evidence" value="ECO:0007669"/>
    <property type="project" value="UniProtKB-SubCell"/>
</dbReference>
<dbReference type="GO" id="GO:0004519">
    <property type="term" value="F:endonuclease activity"/>
    <property type="evidence" value="ECO:0007669"/>
    <property type="project" value="UniProtKB-KW"/>
</dbReference>
<dbReference type="GO" id="GO:0046872">
    <property type="term" value="F:metal ion binding"/>
    <property type="evidence" value="ECO:0007669"/>
    <property type="project" value="UniProtKB-KW"/>
</dbReference>
<dbReference type="Gene3D" id="2.40.50.90">
    <property type="match status" value="1"/>
</dbReference>
<dbReference type="InterPro" id="IPR035437">
    <property type="entry name" value="SNase_OB-fold_sf"/>
</dbReference>
<dbReference type="InterPro" id="IPR016071">
    <property type="entry name" value="Staphylococal_nuclease_OB-fold"/>
</dbReference>
<dbReference type="PANTHER" id="PTHR12302">
    <property type="entry name" value="EBNA2 BINDING PROTEIN P100"/>
    <property type="match status" value="1"/>
</dbReference>
<dbReference type="PANTHER" id="PTHR12302:SF3">
    <property type="entry name" value="SERINE_THREONINE-PROTEIN KINASE 31"/>
    <property type="match status" value="1"/>
</dbReference>
<dbReference type="Pfam" id="PF00565">
    <property type="entry name" value="SNase"/>
    <property type="match status" value="1"/>
</dbReference>
<dbReference type="SMART" id="SM00318">
    <property type="entry name" value="SNc"/>
    <property type="match status" value="1"/>
</dbReference>
<dbReference type="SUPFAM" id="SSF50199">
    <property type="entry name" value="Staphylococcal nuclease"/>
    <property type="match status" value="1"/>
</dbReference>
<dbReference type="PROSITE" id="PS50830">
    <property type="entry name" value="TNASE_3"/>
    <property type="match status" value="1"/>
</dbReference>
<comment type="subcellular location">
    <subcellularLocation>
        <location>Mitochondrion</location>
    </subcellularLocation>
    <subcellularLocation>
        <location evidence="1">Membrane</location>
        <topology evidence="1">Single-pass membrane protein</topology>
    </subcellularLocation>
</comment>
<comment type="similarity">
    <text evidence="4">Belongs to the LCL3 family.</text>
</comment>
<proteinExistence type="inferred from homology"/>
<feature type="chain" id="PRO_0000408661" description="Probable endonuclease LCL3">
    <location>
        <begin position="1"/>
        <end position="258"/>
    </location>
</feature>
<feature type="transmembrane region" description="Helical" evidence="2">
    <location>
        <begin position="12"/>
        <end position="34"/>
    </location>
</feature>
<feature type="domain" description="TNase-like" evidence="3">
    <location>
        <begin position="55"/>
        <end position="245"/>
    </location>
</feature>
<feature type="active site" evidence="3">
    <location>
        <position position="136"/>
    </location>
</feature>
<feature type="active site" evidence="3">
    <location>
        <position position="144"/>
    </location>
</feature>
<feature type="active site" evidence="3">
    <location>
        <position position="184"/>
    </location>
</feature>
<feature type="binding site" evidence="3">
    <location>
        <position position="141"/>
    </location>
    <ligand>
        <name>Ca(2+)</name>
        <dbReference type="ChEBI" id="CHEBI:29108"/>
    </ligand>
</feature>
<gene>
    <name type="primary">LCL3</name>
</gene>
<protein>
    <recommendedName>
        <fullName>Probable endonuclease LCL3</fullName>
        <ecNumber>3.1.-.-</ecNumber>
    </recommendedName>
</protein>
<organism>
    <name type="scientific">Nakaseomyces delphensis</name>
    <name type="common">Yeast</name>
    <name type="synonym">Kluyveromyces delphensis</name>
    <dbReference type="NCBI Taxonomy" id="51657"/>
    <lineage>
        <taxon>Eukaryota</taxon>
        <taxon>Fungi</taxon>
        <taxon>Dikarya</taxon>
        <taxon>Ascomycota</taxon>
        <taxon>Saccharomycotina</taxon>
        <taxon>Saccharomycetes</taxon>
        <taxon>Saccharomycetales</taxon>
        <taxon>Saccharomycetaceae</taxon>
        <taxon>Nakaseomyces</taxon>
    </lineage>
</organism>
<name>LCL3_NAKDE</name>
<accession>Q874L8</accession>
<keyword id="KW-0106">Calcium</keyword>
<keyword id="KW-0255">Endonuclease</keyword>
<keyword id="KW-0378">Hydrolase</keyword>
<keyword id="KW-0472">Membrane</keyword>
<keyword id="KW-0479">Metal-binding</keyword>
<keyword id="KW-0496">Mitochondrion</keyword>
<keyword id="KW-0540">Nuclease</keyword>
<keyword id="KW-0812">Transmembrane</keyword>
<keyword id="KW-1133">Transmembrane helix</keyword>
<evidence type="ECO:0000250" key="1"/>
<evidence type="ECO:0000255" key="2"/>
<evidence type="ECO:0000255" key="3">
    <source>
        <dbReference type="PROSITE-ProRule" id="PRU00272"/>
    </source>
</evidence>
<evidence type="ECO:0000305" key="4"/>